<accession>Q9GPR3</accession>
<accession>Q54Z04</accession>
<organism>
    <name type="scientific">Dictyostelium discoideum</name>
    <name type="common">Social amoeba</name>
    <dbReference type="NCBI Taxonomy" id="44689"/>
    <lineage>
        <taxon>Eukaryota</taxon>
        <taxon>Amoebozoa</taxon>
        <taxon>Evosea</taxon>
        <taxon>Eumycetozoa</taxon>
        <taxon>Dictyostelia</taxon>
        <taxon>Dictyosteliales</taxon>
        <taxon>Dictyosteliaceae</taxon>
        <taxon>Dictyostelium</taxon>
    </lineage>
</organism>
<sequence>MSQKSVCVTYLLWLFFGLFGIHRFYLNRPCSGVLYLFTCGCFFIGWFIDICLIPGMVEDYNAKYDSMNKTTTTVTQVVVQPVYQGSPQQQPYGAPPQQPYGAPPQQPYGAPPQQPYGAPPQQPYGAPPPQPYGAPPPGAYAPQGNYPPPYGPQ</sequence>
<keyword id="KW-0472">Membrane</keyword>
<keyword id="KW-1185">Reference proteome</keyword>
<keyword id="KW-0677">Repeat</keyword>
<keyword id="KW-0812">Transmembrane</keyword>
<keyword id="KW-1133">Transmembrane helix</keyword>
<evidence type="ECO:0000255" key="1"/>
<evidence type="ECO:0000256" key="2">
    <source>
        <dbReference type="SAM" id="MobiDB-lite"/>
    </source>
</evidence>
<evidence type="ECO:0000305" key="3"/>
<feature type="chain" id="PRO_0000330735" description="TM2 domain-containing protein DDB_G0277895">
    <location>
        <begin position="1"/>
        <end position="153"/>
    </location>
</feature>
<feature type="transmembrane region" description="Helical" evidence="1">
    <location>
        <begin position="6"/>
        <end position="26"/>
    </location>
</feature>
<feature type="transmembrane region" description="Helical" evidence="1">
    <location>
        <begin position="33"/>
        <end position="53"/>
    </location>
</feature>
<feature type="domain" description="TM2" evidence="1">
    <location>
        <begin position="3"/>
        <end position="50"/>
    </location>
</feature>
<feature type="repeat" description="1">
    <location>
        <begin position="89"/>
        <end position="96"/>
    </location>
</feature>
<feature type="repeat" description="2">
    <location>
        <begin position="97"/>
        <end position="104"/>
    </location>
</feature>
<feature type="repeat" description="3">
    <location>
        <begin position="105"/>
        <end position="112"/>
    </location>
</feature>
<feature type="repeat" description="4">
    <location>
        <begin position="113"/>
        <end position="120"/>
    </location>
</feature>
<feature type="repeat" description="5">
    <location>
        <begin position="121"/>
        <end position="128"/>
    </location>
</feature>
<feature type="repeat" description="6">
    <location>
        <begin position="129"/>
        <end position="136"/>
    </location>
</feature>
<feature type="region of interest" description="Disordered" evidence="2">
    <location>
        <begin position="85"/>
        <end position="153"/>
    </location>
</feature>
<feature type="region of interest" description="6 X 8 AA tandem repeat of Q-Q-P-Y-G-A-P-P">
    <location>
        <begin position="89"/>
        <end position="136"/>
    </location>
</feature>
<feature type="compositionally biased region" description="Pro residues" evidence="2">
    <location>
        <begin position="93"/>
        <end position="153"/>
    </location>
</feature>
<protein>
    <recommendedName>
        <fullName>TM2 domain-containing protein DDB_G0277895</fullName>
    </recommendedName>
</protein>
<name>TM2D1_DICDI</name>
<comment type="subcellular location">
    <subcellularLocation>
        <location evidence="3">Membrane</location>
        <topology evidence="3">Multi-pass membrane protein</topology>
    </subcellularLocation>
</comment>
<comment type="similarity">
    <text evidence="3">Belongs to the TM2 family.</text>
</comment>
<proteinExistence type="inferred from homology"/>
<gene>
    <name type="ORF">DDB_G0277895</name>
</gene>
<dbReference type="EMBL" id="AF310895">
    <property type="protein sequence ID" value="AAG45137.1"/>
    <property type="molecule type" value="Genomic_DNA"/>
</dbReference>
<dbReference type="EMBL" id="AAFI02000023">
    <property type="protein sequence ID" value="EAL68120.1"/>
    <property type="molecule type" value="Genomic_DNA"/>
</dbReference>
<dbReference type="RefSeq" id="XP_642048.1">
    <property type="nucleotide sequence ID" value="XM_636956.1"/>
</dbReference>
<dbReference type="PaxDb" id="44689-DDB0214922"/>
<dbReference type="EnsemblProtists" id="EAL68120">
    <property type="protein sequence ID" value="EAL68120"/>
    <property type="gene ID" value="DDB_G0277895"/>
</dbReference>
<dbReference type="GeneID" id="8621260"/>
<dbReference type="KEGG" id="ddi:DDB_G0277895"/>
<dbReference type="dictyBase" id="DDB_G0277895"/>
<dbReference type="VEuPathDB" id="AmoebaDB:DDB_G0277895"/>
<dbReference type="eggNOG" id="ENOG502RSR7">
    <property type="taxonomic scope" value="Eukaryota"/>
</dbReference>
<dbReference type="HOGENOM" id="CLU_1716643_0_0_1"/>
<dbReference type="InParanoid" id="Q9GPR3"/>
<dbReference type="OMA" id="LGCCIGF"/>
<dbReference type="PRO" id="PR:Q9GPR3"/>
<dbReference type="Proteomes" id="UP000002195">
    <property type="component" value="Chromosome 3"/>
</dbReference>
<dbReference type="GO" id="GO:0016020">
    <property type="term" value="C:membrane"/>
    <property type="evidence" value="ECO:0007669"/>
    <property type="project" value="UniProtKB-SubCell"/>
</dbReference>
<dbReference type="InterPro" id="IPR007829">
    <property type="entry name" value="TM2"/>
</dbReference>
<dbReference type="InterPro" id="IPR050932">
    <property type="entry name" value="TM2D1-3-like"/>
</dbReference>
<dbReference type="PANTHER" id="PTHR21016">
    <property type="entry name" value="BETA-AMYLOID BINDING PROTEIN-RELATED"/>
    <property type="match status" value="1"/>
</dbReference>
<dbReference type="PANTHER" id="PTHR21016:SF25">
    <property type="entry name" value="TM2 DOMAIN-CONTAINING PROTEIN DDB_G0277895-RELATED"/>
    <property type="match status" value="1"/>
</dbReference>
<dbReference type="Pfam" id="PF05154">
    <property type="entry name" value="TM2"/>
    <property type="match status" value="1"/>
</dbReference>
<reference key="1">
    <citation type="journal article" date="2001" name="Nucleic Acids Res.">
        <title>The Dictyostelium discoideum family of Rho-related proteins.</title>
        <authorList>
            <person name="Rivero F."/>
            <person name="Dislich H."/>
            <person name="Gloeckner G."/>
            <person name="Noegel A.A."/>
        </authorList>
    </citation>
    <scope>NUCLEOTIDE SEQUENCE [GENOMIC DNA]</scope>
    <source>
        <strain>AX4</strain>
    </source>
</reference>
<reference key="2">
    <citation type="journal article" date="2005" name="Nature">
        <title>The genome of the social amoeba Dictyostelium discoideum.</title>
        <authorList>
            <person name="Eichinger L."/>
            <person name="Pachebat J.A."/>
            <person name="Gloeckner G."/>
            <person name="Rajandream M.A."/>
            <person name="Sucgang R."/>
            <person name="Berriman M."/>
            <person name="Song J."/>
            <person name="Olsen R."/>
            <person name="Szafranski K."/>
            <person name="Xu Q."/>
            <person name="Tunggal B."/>
            <person name="Kummerfeld S."/>
            <person name="Madera M."/>
            <person name="Konfortov B.A."/>
            <person name="Rivero F."/>
            <person name="Bankier A.T."/>
            <person name="Lehmann R."/>
            <person name="Hamlin N."/>
            <person name="Davies R."/>
            <person name="Gaudet P."/>
            <person name="Fey P."/>
            <person name="Pilcher K."/>
            <person name="Chen G."/>
            <person name="Saunders D."/>
            <person name="Sodergren E.J."/>
            <person name="Davis P."/>
            <person name="Kerhornou A."/>
            <person name="Nie X."/>
            <person name="Hall N."/>
            <person name="Anjard C."/>
            <person name="Hemphill L."/>
            <person name="Bason N."/>
            <person name="Farbrother P."/>
            <person name="Desany B."/>
            <person name="Just E."/>
            <person name="Morio T."/>
            <person name="Rost R."/>
            <person name="Churcher C.M."/>
            <person name="Cooper J."/>
            <person name="Haydock S."/>
            <person name="van Driessche N."/>
            <person name="Cronin A."/>
            <person name="Goodhead I."/>
            <person name="Muzny D.M."/>
            <person name="Mourier T."/>
            <person name="Pain A."/>
            <person name="Lu M."/>
            <person name="Harper D."/>
            <person name="Lindsay R."/>
            <person name="Hauser H."/>
            <person name="James K.D."/>
            <person name="Quiles M."/>
            <person name="Madan Babu M."/>
            <person name="Saito T."/>
            <person name="Buchrieser C."/>
            <person name="Wardroper A."/>
            <person name="Felder M."/>
            <person name="Thangavelu M."/>
            <person name="Johnson D."/>
            <person name="Knights A."/>
            <person name="Loulseged H."/>
            <person name="Mungall K.L."/>
            <person name="Oliver K."/>
            <person name="Price C."/>
            <person name="Quail M.A."/>
            <person name="Urushihara H."/>
            <person name="Hernandez J."/>
            <person name="Rabbinowitsch E."/>
            <person name="Steffen D."/>
            <person name="Sanders M."/>
            <person name="Ma J."/>
            <person name="Kohara Y."/>
            <person name="Sharp S."/>
            <person name="Simmonds M.N."/>
            <person name="Spiegler S."/>
            <person name="Tivey A."/>
            <person name="Sugano S."/>
            <person name="White B."/>
            <person name="Walker D."/>
            <person name="Woodward J.R."/>
            <person name="Winckler T."/>
            <person name="Tanaka Y."/>
            <person name="Shaulsky G."/>
            <person name="Schleicher M."/>
            <person name="Weinstock G.M."/>
            <person name="Rosenthal A."/>
            <person name="Cox E.C."/>
            <person name="Chisholm R.L."/>
            <person name="Gibbs R.A."/>
            <person name="Loomis W.F."/>
            <person name="Platzer M."/>
            <person name="Kay R.R."/>
            <person name="Williams J.G."/>
            <person name="Dear P.H."/>
            <person name="Noegel A.A."/>
            <person name="Barrell B.G."/>
            <person name="Kuspa A."/>
        </authorList>
    </citation>
    <scope>NUCLEOTIDE SEQUENCE [LARGE SCALE GENOMIC DNA]</scope>
    <source>
        <strain>AX4</strain>
    </source>
</reference>